<feature type="chain" id="PRO_0000369068" description="Non-structural protein 1">
    <location>
        <begin position="1"/>
        <end position="491"/>
    </location>
</feature>
<feature type="region of interest" description="RNA-binding" evidence="1">
    <location>
        <begin position="1"/>
        <end position="81"/>
    </location>
</feature>
<feature type="region of interest" description="Zinc-binding domain" evidence="1">
    <location>
        <begin position="42"/>
        <end position="79"/>
    </location>
</feature>
<feature type="region of interest" description="Important for cytoskeleton localization" evidence="1">
    <location>
        <begin position="82"/>
        <end position="176"/>
    </location>
</feature>
<feature type="region of interest" description="Interaction with host IRF3" evidence="1">
    <location>
        <begin position="320"/>
        <end position="491"/>
    </location>
</feature>
<feature type="short sequence motif" description="pLxIS motif" evidence="1">
    <location>
        <begin position="485"/>
        <end position="488"/>
    </location>
</feature>
<protein>
    <recommendedName>
        <fullName evidence="1">Non-structural protein 1</fullName>
        <shortName evidence="1">NSP1</shortName>
    </recommendedName>
    <alternativeName>
        <fullName evidence="1">NCVP2</fullName>
    </alternativeName>
    <alternativeName>
        <fullName evidence="1">Non-structural RNA-binding protein 53</fullName>
        <shortName evidence="1">NS53</shortName>
    </alternativeName>
</protein>
<organism>
    <name type="scientific">Rotavirus A (isolate RVA/Cow/Thailand/A44/1988/G10P8[11])</name>
    <name type="common">RV-A</name>
    <dbReference type="NCBI Taxonomy" id="1835658"/>
    <lineage>
        <taxon>Viruses</taxon>
        <taxon>Riboviria</taxon>
        <taxon>Orthornavirae</taxon>
        <taxon>Duplornaviricota</taxon>
        <taxon>Resentoviricetes</taxon>
        <taxon>Reovirales</taxon>
        <taxon>Sedoreoviridae</taxon>
        <taxon>Rotavirus</taxon>
        <taxon>Rotavirus A</taxon>
    </lineage>
</organism>
<evidence type="ECO:0000255" key="1">
    <source>
        <dbReference type="HAMAP-Rule" id="MF_04088"/>
    </source>
</evidence>
<accession>Q65696</accession>
<name>NSP1_ROTBA</name>
<comment type="function">
    <text evidence="1">Plays a role in the inhibition of host innate immunity by inducing the degradation of key host factors required to activate interferon production such as IRF3, IRF5 or IRF7. Associates with components of cullin RING ligases (CRLs) including CUL1 or CUL3, which are essential multisubunit ubiquitination complexes, to modulate their activities.</text>
</comment>
<comment type="subunit">
    <text evidence="1">Interacts (via C-terminus) with host IRF3; this interaction leads to IRF3 degradation. Interacts with host IRF7; this interaction leads to IRF7 degradation. Interacts with host CUL1 and CUL3.</text>
</comment>
<comment type="subcellular location">
    <subcellularLocation>
        <location evidence="1">Host cytoplasm</location>
        <location evidence="1">Host cytoskeleton</location>
    </subcellularLocation>
</comment>
<comment type="domain">
    <text evidence="1">The integrity of the zinc-binding domain in NSP1 is important for degradation of host IRF3.</text>
</comment>
<comment type="domain">
    <text evidence="1">The pLxIS motif targets host IRF3 for degradation; however phosphorylation of NSP1 pLxIS motif is not required for its activity.</text>
</comment>
<comment type="similarity">
    <text evidence="1">Belongs to the rotavirus NSP1 family.</text>
</comment>
<keyword id="KW-1035">Host cytoplasm</keyword>
<keyword id="KW-1037">Host cytoskeleton</keyword>
<keyword id="KW-0945">Host-virus interaction</keyword>
<keyword id="KW-1090">Inhibition of host innate immune response by virus</keyword>
<keyword id="KW-1092">Inhibition of host IRF3 by virus</keyword>
<keyword id="KW-1093">Inhibition of host IRF7 by virus</keyword>
<keyword id="KW-1113">Inhibition of host RLR pathway by virus</keyword>
<keyword id="KW-0922">Interferon antiviral system evasion</keyword>
<keyword id="KW-0479">Metal-binding</keyword>
<keyword id="KW-0694">RNA-binding</keyword>
<keyword id="KW-0899">Viral immunoevasion</keyword>
<proteinExistence type="evidence at transcript level"/>
<reference key="1">
    <citation type="journal article" date="1996" name="Arch. Virol.">
        <title>Species-specific and interspecies relatedness of NSP1 sequences in human, porcine, bovine, feline, and equine rotavirus strains.</title>
        <authorList>
            <person name="Kojima K."/>
            <person name="Taniguchi K."/>
            <person name="Kobayashi N."/>
        </authorList>
    </citation>
    <scope>NUCLEOTIDE SEQUENCE [MRNA]</scope>
</reference>
<sequence>MATFKDACYHYKKLNKLNSLVLKLGANDEWRPAPVTKYKGWCLDCCQYTNLTYCRGCALYHVCQWCSQYNRCFLDEEPHLLRMRTFKDVVTKEDIEGLLTMYETLFPINEKLVNKFINFVKQRKCRNEYLLEWYNHLLMPITLQALTINLEDSAYYIFGYYDCMECENQTPFQFVNLLEKYDKLLLDDRNFHRMSHLPAILQQEYALRYFSKSRFLSKGKKRLSRHDFSDNLMEDRHSPTSLMQVVRNCISTHMNDCEWNKRCHVIVDAKNYISIMNSSYTEHYSVSQRCKLFTKYKFGIISKLVKPNYIFSNHESYALNVHNCKWCQINNHYKVWEDFRLRKIYNNIMDFIRALVKSNGNVGHCSSQESVYKYIPDIFLICKKEKWNEAVKMLFNYLEPVDINGTEYALLDYEVNWEVRGLVMQNMDGKVPRILNMNDTKKILSAIIFDWFDTRYMRETPMTTSTTNQLRTLNKKNELIDEYDLELSDVE</sequence>
<dbReference type="EMBL" id="U23726">
    <property type="protein sequence ID" value="AAB04156.1"/>
    <property type="molecule type" value="mRNA"/>
</dbReference>
<dbReference type="GO" id="GO:0030430">
    <property type="term" value="C:host cell cytoplasm"/>
    <property type="evidence" value="ECO:0007669"/>
    <property type="project" value="UniProtKB-UniRule"/>
</dbReference>
<dbReference type="GO" id="GO:0044163">
    <property type="term" value="C:host cytoskeleton"/>
    <property type="evidence" value="ECO:0007669"/>
    <property type="project" value="UniProtKB-SubCell"/>
</dbReference>
<dbReference type="GO" id="GO:0046872">
    <property type="term" value="F:metal ion binding"/>
    <property type="evidence" value="ECO:0007669"/>
    <property type="project" value="UniProtKB-UniRule"/>
</dbReference>
<dbReference type="GO" id="GO:0003723">
    <property type="term" value="F:RNA binding"/>
    <property type="evidence" value="ECO:0007669"/>
    <property type="project" value="UniProtKB-UniRule"/>
</dbReference>
<dbReference type="GO" id="GO:0039548">
    <property type="term" value="P:symbiont-mediated suppression of host cytoplasmic pattern recognition receptor signaling pathway via inhibition of IRF3 activity"/>
    <property type="evidence" value="ECO:0007669"/>
    <property type="project" value="UniProtKB-UniRule"/>
</dbReference>
<dbReference type="GO" id="GO:0039557">
    <property type="term" value="P:symbiont-mediated suppression of host cytoplasmic pattern recognition receptor signaling pathway via inhibition of IRF7 activity"/>
    <property type="evidence" value="ECO:0007669"/>
    <property type="project" value="UniProtKB-UniRule"/>
</dbReference>
<dbReference type="HAMAP" id="MF_04088">
    <property type="entry name" value="ROTA_NSP1"/>
    <property type="match status" value="1"/>
</dbReference>
<dbReference type="InterPro" id="IPR002148">
    <property type="entry name" value="Rotavirus_NSP1"/>
</dbReference>
<dbReference type="Pfam" id="PF00981">
    <property type="entry name" value="Rota_NS53"/>
    <property type="match status" value="1"/>
</dbReference>
<organismHost>
    <name type="scientific">Bos taurus</name>
    <name type="common">Bovine</name>
    <dbReference type="NCBI Taxonomy" id="9913"/>
</organismHost>